<reference key="1">
    <citation type="journal article" date="2004" name="Mol. Biol. Evol.">
        <title>The chloroplast genome of Nymphaea alba: whole-genome analyses and the problem of identifying the most basal angiosperm.</title>
        <authorList>
            <person name="Goremykin V.V."/>
            <person name="Hirsch-Ernst K.I."/>
            <person name="Woelfl S."/>
            <person name="Hellwig F.H."/>
        </authorList>
    </citation>
    <scope>NUCLEOTIDE SEQUENCE [LARGE SCALE GENOMIC DNA]</scope>
</reference>
<gene>
    <name evidence="1" type="primary">ndhH</name>
</gene>
<name>NDHH_NYMAL</name>
<dbReference type="EC" id="7.1.1.-" evidence="1"/>
<dbReference type="EMBL" id="AJ627251">
    <property type="protein sequence ID" value="CAF28652.1"/>
    <property type="molecule type" value="Genomic_DNA"/>
</dbReference>
<dbReference type="RefSeq" id="YP_053212.1">
    <property type="nucleotide sequence ID" value="NC_006050.1"/>
</dbReference>
<dbReference type="SMR" id="Q6EVZ4"/>
<dbReference type="GeneID" id="2896168"/>
<dbReference type="GO" id="GO:0009535">
    <property type="term" value="C:chloroplast thylakoid membrane"/>
    <property type="evidence" value="ECO:0007669"/>
    <property type="project" value="UniProtKB-SubCell"/>
</dbReference>
<dbReference type="GO" id="GO:0051287">
    <property type="term" value="F:NAD binding"/>
    <property type="evidence" value="ECO:0007669"/>
    <property type="project" value="InterPro"/>
</dbReference>
<dbReference type="GO" id="GO:0016655">
    <property type="term" value="F:oxidoreductase activity, acting on NAD(P)H, quinone or similar compound as acceptor"/>
    <property type="evidence" value="ECO:0007669"/>
    <property type="project" value="UniProtKB-UniRule"/>
</dbReference>
<dbReference type="GO" id="GO:0048038">
    <property type="term" value="F:quinone binding"/>
    <property type="evidence" value="ECO:0007669"/>
    <property type="project" value="UniProtKB-KW"/>
</dbReference>
<dbReference type="GO" id="GO:0019684">
    <property type="term" value="P:photosynthesis, light reaction"/>
    <property type="evidence" value="ECO:0007669"/>
    <property type="project" value="UniProtKB-UniRule"/>
</dbReference>
<dbReference type="FunFam" id="1.10.645.10:FF:000003">
    <property type="entry name" value="NAD(P)H-quinone oxidoreductase subunit H, chloroplastic"/>
    <property type="match status" value="1"/>
</dbReference>
<dbReference type="Gene3D" id="1.10.645.10">
    <property type="entry name" value="Cytochrome-c3 Hydrogenase, chain B"/>
    <property type="match status" value="1"/>
</dbReference>
<dbReference type="HAMAP" id="MF_01358">
    <property type="entry name" value="NDH1_NuoD"/>
    <property type="match status" value="1"/>
</dbReference>
<dbReference type="InterPro" id="IPR001135">
    <property type="entry name" value="NADH_Q_OxRdtase_suD"/>
</dbReference>
<dbReference type="InterPro" id="IPR014029">
    <property type="entry name" value="NADH_UbQ_OxRdtase_49kDa_CS"/>
</dbReference>
<dbReference type="InterPro" id="IPR022885">
    <property type="entry name" value="NDH1_su_D/H"/>
</dbReference>
<dbReference type="InterPro" id="IPR029014">
    <property type="entry name" value="NiFe-Hase_large"/>
</dbReference>
<dbReference type="NCBIfam" id="NF004739">
    <property type="entry name" value="PRK06075.1"/>
    <property type="match status" value="1"/>
</dbReference>
<dbReference type="NCBIfam" id="NF005649">
    <property type="entry name" value="PRK07415.1"/>
    <property type="match status" value="1"/>
</dbReference>
<dbReference type="PANTHER" id="PTHR11993:SF10">
    <property type="entry name" value="NADH DEHYDROGENASE [UBIQUINONE] IRON-SULFUR PROTEIN 2, MITOCHONDRIAL"/>
    <property type="match status" value="1"/>
</dbReference>
<dbReference type="PANTHER" id="PTHR11993">
    <property type="entry name" value="NADH-UBIQUINONE OXIDOREDUCTASE 49 KDA SUBUNIT"/>
    <property type="match status" value="1"/>
</dbReference>
<dbReference type="Pfam" id="PF00346">
    <property type="entry name" value="Complex1_49kDa"/>
    <property type="match status" value="1"/>
</dbReference>
<dbReference type="SUPFAM" id="SSF56762">
    <property type="entry name" value="HydB/Nqo4-like"/>
    <property type="match status" value="1"/>
</dbReference>
<dbReference type="PROSITE" id="PS00535">
    <property type="entry name" value="COMPLEX1_49K"/>
    <property type="match status" value="1"/>
</dbReference>
<accession>Q6EVZ4</accession>
<evidence type="ECO:0000255" key="1">
    <source>
        <dbReference type="HAMAP-Rule" id="MF_01358"/>
    </source>
</evidence>
<organism>
    <name type="scientific">Nymphaea alba</name>
    <name type="common">White water-lily</name>
    <name type="synonym">Castalia alba</name>
    <dbReference type="NCBI Taxonomy" id="34301"/>
    <lineage>
        <taxon>Eukaryota</taxon>
        <taxon>Viridiplantae</taxon>
        <taxon>Streptophyta</taxon>
        <taxon>Embryophyta</taxon>
        <taxon>Tracheophyta</taxon>
        <taxon>Spermatophyta</taxon>
        <taxon>Magnoliopsida</taxon>
        <taxon>Nymphaeales</taxon>
        <taxon>Nymphaeaceae</taxon>
        <taxon>Nymphaea</taxon>
    </lineage>
</organism>
<feature type="chain" id="PRO_0000358011" description="NAD(P)H-quinone oxidoreductase subunit H, chloroplastic">
    <location>
        <begin position="1"/>
        <end position="393"/>
    </location>
</feature>
<sequence>MTVPDARKDLLVVNMGPHHPSMHGVLRLIVTLDGEDVIDCEPILGYLHRGMEKIAENRTIIQYLPYVTRWDYLATMFTEAITVNAPEELGNIQVPKRASYIRVIMLELSRIASHLLWLGPFMADIGAQTPFFYIFRERELLYDLFEAATGMRMMHNYFRIGGVAADLPHGWIDKCLDFCDYFLTGVVEYQKLITRNPIFLERVEGVGFIGGEEAINWGLSGPMLRASGIQWDLRKVDRYECYDEFDWEVQWQKEGDSLARYLVRIGEMTESIKIIQQALEGIPGGPYENLEFRRFAGTKDSELNDFEYRFISKKPSPSFELSKQELYVRVEAPKGELGIFLIGDNSVFPWRWKIRPPGFINLQILPQLVKRMKLADIMTILGSIDIIMGEVDR</sequence>
<proteinExistence type="inferred from homology"/>
<comment type="function">
    <text evidence="1">NDH shuttles electrons from NAD(P)H:plastoquinone, via FMN and iron-sulfur (Fe-S) centers, to quinones in the photosynthetic chain and possibly in a chloroplast respiratory chain. The immediate electron acceptor for the enzyme in this species is believed to be plastoquinone. Couples the redox reaction to proton translocation, and thus conserves the redox energy in a proton gradient.</text>
</comment>
<comment type="catalytic activity">
    <reaction evidence="1">
        <text>a plastoquinone + NADH + (n+1) H(+)(in) = a plastoquinol + NAD(+) + n H(+)(out)</text>
        <dbReference type="Rhea" id="RHEA:42608"/>
        <dbReference type="Rhea" id="RHEA-COMP:9561"/>
        <dbReference type="Rhea" id="RHEA-COMP:9562"/>
        <dbReference type="ChEBI" id="CHEBI:15378"/>
        <dbReference type="ChEBI" id="CHEBI:17757"/>
        <dbReference type="ChEBI" id="CHEBI:57540"/>
        <dbReference type="ChEBI" id="CHEBI:57945"/>
        <dbReference type="ChEBI" id="CHEBI:62192"/>
    </reaction>
</comment>
<comment type="catalytic activity">
    <reaction evidence="1">
        <text>a plastoquinone + NADPH + (n+1) H(+)(in) = a plastoquinol + NADP(+) + n H(+)(out)</text>
        <dbReference type="Rhea" id="RHEA:42612"/>
        <dbReference type="Rhea" id="RHEA-COMP:9561"/>
        <dbReference type="Rhea" id="RHEA-COMP:9562"/>
        <dbReference type="ChEBI" id="CHEBI:15378"/>
        <dbReference type="ChEBI" id="CHEBI:17757"/>
        <dbReference type="ChEBI" id="CHEBI:57783"/>
        <dbReference type="ChEBI" id="CHEBI:58349"/>
        <dbReference type="ChEBI" id="CHEBI:62192"/>
    </reaction>
</comment>
<comment type="subunit">
    <text evidence="1">NDH is composed of at least 16 different subunits, 5 of which are encoded in the nucleus.</text>
</comment>
<comment type="subcellular location">
    <subcellularLocation>
        <location evidence="1">Plastid</location>
        <location evidence="1">Chloroplast thylakoid membrane</location>
        <topology evidence="1">Peripheral membrane protein</topology>
        <orientation evidence="1">Stromal side</orientation>
    </subcellularLocation>
</comment>
<comment type="similarity">
    <text evidence="1">Belongs to the complex I 49 kDa subunit family.</text>
</comment>
<geneLocation type="chloroplast"/>
<protein>
    <recommendedName>
        <fullName evidence="1">NAD(P)H-quinone oxidoreductase subunit H, chloroplastic</fullName>
        <ecNumber evidence="1">7.1.1.-</ecNumber>
    </recommendedName>
    <alternativeName>
        <fullName>NAD(P)H dehydrogenase subunit H</fullName>
    </alternativeName>
    <alternativeName>
        <fullName evidence="1">NADH-plastoquinone oxidoreductase 49 kDa subunit</fullName>
    </alternativeName>
    <alternativeName>
        <fullName evidence="1">NADH-plastoquinone oxidoreductase subunit H</fullName>
    </alternativeName>
</protein>
<keyword id="KW-0150">Chloroplast</keyword>
<keyword id="KW-0472">Membrane</keyword>
<keyword id="KW-0520">NAD</keyword>
<keyword id="KW-0521">NADP</keyword>
<keyword id="KW-0934">Plastid</keyword>
<keyword id="KW-0618">Plastoquinone</keyword>
<keyword id="KW-0874">Quinone</keyword>
<keyword id="KW-0793">Thylakoid</keyword>
<keyword id="KW-1278">Translocase</keyword>
<keyword id="KW-0813">Transport</keyword>